<gene>
    <name evidence="1" type="primary">dtd</name>
    <name type="ordered locus">CPR_1903</name>
</gene>
<keyword id="KW-0963">Cytoplasm</keyword>
<keyword id="KW-0378">Hydrolase</keyword>
<keyword id="KW-0694">RNA-binding</keyword>
<keyword id="KW-0820">tRNA-binding</keyword>
<protein>
    <recommendedName>
        <fullName evidence="1">D-aminoacyl-tRNA deacylase</fullName>
        <shortName evidence="1">DTD</shortName>
        <ecNumber evidence="1">3.1.1.96</ecNumber>
    </recommendedName>
    <alternativeName>
        <fullName evidence="1">Gly-tRNA(Ala) deacylase</fullName>
    </alternativeName>
</protein>
<proteinExistence type="inferred from homology"/>
<organism>
    <name type="scientific">Clostridium perfringens (strain SM101 / Type A)</name>
    <dbReference type="NCBI Taxonomy" id="289380"/>
    <lineage>
        <taxon>Bacteria</taxon>
        <taxon>Bacillati</taxon>
        <taxon>Bacillota</taxon>
        <taxon>Clostridia</taxon>
        <taxon>Eubacteriales</taxon>
        <taxon>Clostridiaceae</taxon>
        <taxon>Clostridium</taxon>
    </lineage>
</organism>
<comment type="function">
    <text evidence="1">An aminoacyl-tRNA editing enzyme that deacylates mischarged D-aminoacyl-tRNAs. Also deacylates mischarged glycyl-tRNA(Ala), protecting cells against glycine mischarging by AlaRS. Acts via tRNA-based rather than protein-based catalysis; rejects L-amino acids rather than detecting D-amino acids in the active site. By recycling D-aminoacyl-tRNA to D-amino acids and free tRNA molecules, this enzyme counteracts the toxicity associated with the formation of D-aminoacyl-tRNA entities in vivo and helps enforce protein L-homochirality.</text>
</comment>
<comment type="catalytic activity">
    <reaction evidence="1">
        <text>glycyl-tRNA(Ala) + H2O = tRNA(Ala) + glycine + H(+)</text>
        <dbReference type="Rhea" id="RHEA:53744"/>
        <dbReference type="Rhea" id="RHEA-COMP:9657"/>
        <dbReference type="Rhea" id="RHEA-COMP:13640"/>
        <dbReference type="ChEBI" id="CHEBI:15377"/>
        <dbReference type="ChEBI" id="CHEBI:15378"/>
        <dbReference type="ChEBI" id="CHEBI:57305"/>
        <dbReference type="ChEBI" id="CHEBI:78442"/>
        <dbReference type="ChEBI" id="CHEBI:78522"/>
        <dbReference type="EC" id="3.1.1.96"/>
    </reaction>
</comment>
<comment type="catalytic activity">
    <reaction evidence="1">
        <text>a D-aminoacyl-tRNA + H2O = a tRNA + a D-alpha-amino acid + H(+)</text>
        <dbReference type="Rhea" id="RHEA:13953"/>
        <dbReference type="Rhea" id="RHEA-COMP:10123"/>
        <dbReference type="Rhea" id="RHEA-COMP:10124"/>
        <dbReference type="ChEBI" id="CHEBI:15377"/>
        <dbReference type="ChEBI" id="CHEBI:15378"/>
        <dbReference type="ChEBI" id="CHEBI:59871"/>
        <dbReference type="ChEBI" id="CHEBI:78442"/>
        <dbReference type="ChEBI" id="CHEBI:79333"/>
        <dbReference type="EC" id="3.1.1.96"/>
    </reaction>
</comment>
<comment type="subunit">
    <text evidence="1">Homodimer.</text>
</comment>
<comment type="subcellular location">
    <subcellularLocation>
        <location evidence="1">Cytoplasm</location>
    </subcellularLocation>
</comment>
<comment type="domain">
    <text evidence="1">A Gly-cisPro motif from one monomer fits into the active site of the other monomer to allow specific chiral rejection of L-amino acids.</text>
</comment>
<comment type="similarity">
    <text evidence="1">Belongs to the DTD family.</text>
</comment>
<evidence type="ECO:0000255" key="1">
    <source>
        <dbReference type="HAMAP-Rule" id="MF_00518"/>
    </source>
</evidence>
<reference key="1">
    <citation type="journal article" date="2006" name="Genome Res.">
        <title>Skewed genomic variability in strains of the toxigenic bacterial pathogen, Clostridium perfringens.</title>
        <authorList>
            <person name="Myers G.S.A."/>
            <person name="Rasko D.A."/>
            <person name="Cheung J.K."/>
            <person name="Ravel J."/>
            <person name="Seshadri R."/>
            <person name="DeBoy R.T."/>
            <person name="Ren Q."/>
            <person name="Varga J."/>
            <person name="Awad M.M."/>
            <person name="Brinkac L.M."/>
            <person name="Daugherty S.C."/>
            <person name="Haft D.H."/>
            <person name="Dodson R.J."/>
            <person name="Madupu R."/>
            <person name="Nelson W.C."/>
            <person name="Rosovitz M.J."/>
            <person name="Sullivan S.A."/>
            <person name="Khouri H."/>
            <person name="Dimitrov G.I."/>
            <person name="Watkins K.L."/>
            <person name="Mulligan S."/>
            <person name="Benton J."/>
            <person name="Radune D."/>
            <person name="Fisher D.J."/>
            <person name="Atkins H.S."/>
            <person name="Hiscox T."/>
            <person name="Jost B.H."/>
            <person name="Billington S.J."/>
            <person name="Songer J.G."/>
            <person name="McClane B.A."/>
            <person name="Titball R.W."/>
            <person name="Rood J.I."/>
            <person name="Melville S.B."/>
            <person name="Paulsen I.T."/>
        </authorList>
    </citation>
    <scope>NUCLEOTIDE SEQUENCE [LARGE SCALE GENOMIC DNA]</scope>
    <source>
        <strain>SM101 / Type A</strain>
    </source>
</reference>
<dbReference type="EC" id="3.1.1.96" evidence="1"/>
<dbReference type="EMBL" id="CP000312">
    <property type="protein sequence ID" value="ABG86731.1"/>
    <property type="molecule type" value="Genomic_DNA"/>
</dbReference>
<dbReference type="RefSeq" id="WP_003451157.1">
    <property type="nucleotide sequence ID" value="NZ_CAXVKH010000002.1"/>
</dbReference>
<dbReference type="SMR" id="Q0SRP4"/>
<dbReference type="GeneID" id="93001527"/>
<dbReference type="KEGG" id="cpr:CPR_1903"/>
<dbReference type="Proteomes" id="UP000001824">
    <property type="component" value="Chromosome"/>
</dbReference>
<dbReference type="GO" id="GO:0005737">
    <property type="term" value="C:cytoplasm"/>
    <property type="evidence" value="ECO:0007669"/>
    <property type="project" value="UniProtKB-SubCell"/>
</dbReference>
<dbReference type="GO" id="GO:0051500">
    <property type="term" value="F:D-tyrosyl-tRNA(Tyr) deacylase activity"/>
    <property type="evidence" value="ECO:0007669"/>
    <property type="project" value="TreeGrafter"/>
</dbReference>
<dbReference type="GO" id="GO:0106026">
    <property type="term" value="F:Gly-tRNA(Ala) deacylase activity"/>
    <property type="evidence" value="ECO:0007669"/>
    <property type="project" value="UniProtKB-UniRule"/>
</dbReference>
<dbReference type="GO" id="GO:0043908">
    <property type="term" value="F:Ser(Gly)-tRNA(Ala) hydrolase activity"/>
    <property type="evidence" value="ECO:0007669"/>
    <property type="project" value="UniProtKB-UniRule"/>
</dbReference>
<dbReference type="GO" id="GO:0000049">
    <property type="term" value="F:tRNA binding"/>
    <property type="evidence" value="ECO:0007669"/>
    <property type="project" value="UniProtKB-UniRule"/>
</dbReference>
<dbReference type="GO" id="GO:0019478">
    <property type="term" value="P:D-amino acid catabolic process"/>
    <property type="evidence" value="ECO:0007669"/>
    <property type="project" value="UniProtKB-UniRule"/>
</dbReference>
<dbReference type="CDD" id="cd00563">
    <property type="entry name" value="Dtyr_deacylase"/>
    <property type="match status" value="1"/>
</dbReference>
<dbReference type="FunFam" id="3.50.80.10:FF:000001">
    <property type="entry name" value="D-aminoacyl-tRNA deacylase"/>
    <property type="match status" value="1"/>
</dbReference>
<dbReference type="Gene3D" id="3.50.80.10">
    <property type="entry name" value="D-tyrosyl-tRNA(Tyr) deacylase"/>
    <property type="match status" value="1"/>
</dbReference>
<dbReference type="HAMAP" id="MF_00518">
    <property type="entry name" value="Deacylase_Dtd"/>
    <property type="match status" value="1"/>
</dbReference>
<dbReference type="InterPro" id="IPR003732">
    <property type="entry name" value="Daa-tRNA_deacyls_DTD"/>
</dbReference>
<dbReference type="InterPro" id="IPR023509">
    <property type="entry name" value="DTD-like_sf"/>
</dbReference>
<dbReference type="NCBIfam" id="TIGR00256">
    <property type="entry name" value="D-aminoacyl-tRNA deacylase"/>
    <property type="match status" value="1"/>
</dbReference>
<dbReference type="PANTHER" id="PTHR10472:SF5">
    <property type="entry name" value="D-AMINOACYL-TRNA DEACYLASE 1"/>
    <property type="match status" value="1"/>
</dbReference>
<dbReference type="PANTHER" id="PTHR10472">
    <property type="entry name" value="D-TYROSYL-TRNA TYR DEACYLASE"/>
    <property type="match status" value="1"/>
</dbReference>
<dbReference type="Pfam" id="PF02580">
    <property type="entry name" value="Tyr_Deacylase"/>
    <property type="match status" value="1"/>
</dbReference>
<dbReference type="SUPFAM" id="SSF69500">
    <property type="entry name" value="DTD-like"/>
    <property type="match status" value="1"/>
</dbReference>
<feature type="chain" id="PRO_0000259273" description="D-aminoacyl-tRNA deacylase">
    <location>
        <begin position="1"/>
        <end position="149"/>
    </location>
</feature>
<feature type="short sequence motif" description="Gly-cisPro motif, important for rejection of L-amino acids" evidence="1">
    <location>
        <begin position="137"/>
        <end position="138"/>
    </location>
</feature>
<name>DTD_CLOPS</name>
<accession>Q0SRP4</accession>
<sequence>MRVVVQRVNKSSVKVDNEIVGSINKGFNVLVGIGKEDTIEDLKYMKDKVLNLRVFEDEEDKMNLSLKDVCGELLLISQFTLYGDCRKGRRPNFMNALGGDEAKKLFDEFVSMCREEGIKVETGVFGAHMVVDIENDGPVTLILDSKKNF</sequence>